<sequence>MRRGAIGIGTLIVFIAMVLVAAVAAGVLISTSGYLQQRAMSVGLETTRDVSSGLRIISIWGYAPKNTTGNTTIQSNITKLAIYIAPNAGSEPINLNQTRIILTVKSTMVIFTFGGEDTVADWTNGAVNVFNETIWENINGTKFGVGVVVDSDKSMLSNKASPGMNSGDLAVLLINTKLAFNKYGGIPPNTKVVGKILPPHGAGTVIDLITPATYSSEGIELQ</sequence>
<dbReference type="EMBL" id="AJ248287">
    <property type="protein sequence ID" value="CAB50398.1"/>
    <property type="molecule type" value="Genomic_DNA"/>
</dbReference>
<dbReference type="EMBL" id="HE613800">
    <property type="protein sequence ID" value="CCE70945.1"/>
    <property type="molecule type" value="Genomic_DNA"/>
</dbReference>
<dbReference type="PIR" id="A75063">
    <property type="entry name" value="A75063"/>
</dbReference>
<dbReference type="RefSeq" id="WP_010868611.1">
    <property type="nucleotide sequence ID" value="NC_000868.1"/>
</dbReference>
<dbReference type="SMR" id="Q9UYL4"/>
<dbReference type="STRING" id="272844.PAB1380"/>
<dbReference type="KEGG" id="pab:PAB1380"/>
<dbReference type="PATRIC" id="fig|272844.11.peg.1591"/>
<dbReference type="eggNOG" id="arCOG01829">
    <property type="taxonomic scope" value="Archaea"/>
</dbReference>
<dbReference type="HOGENOM" id="CLU_051124_0_1_2"/>
<dbReference type="OrthoDB" id="102632at2157"/>
<dbReference type="PhylomeDB" id="Q9UYL4"/>
<dbReference type="Proteomes" id="UP000000810">
    <property type="component" value="Chromosome"/>
</dbReference>
<dbReference type="Proteomes" id="UP000009139">
    <property type="component" value="Chromosome"/>
</dbReference>
<dbReference type="GO" id="GO:0097589">
    <property type="term" value="C:archaeal-type flagellum"/>
    <property type="evidence" value="ECO:0007669"/>
    <property type="project" value="UniProtKB-SubCell"/>
</dbReference>
<dbReference type="GO" id="GO:0005198">
    <property type="term" value="F:structural molecule activity"/>
    <property type="evidence" value="ECO:0007669"/>
    <property type="project" value="InterPro"/>
</dbReference>
<dbReference type="GO" id="GO:0097588">
    <property type="term" value="P:archaeal or bacterial-type flagellum-dependent cell motility"/>
    <property type="evidence" value="ECO:0007669"/>
    <property type="project" value="InterPro"/>
</dbReference>
<dbReference type="InterPro" id="IPR013373">
    <property type="entry name" value="Flagellin/pilin_N_arc"/>
</dbReference>
<dbReference type="InterPro" id="IPR002774">
    <property type="entry name" value="Flagellin_arc"/>
</dbReference>
<dbReference type="NCBIfam" id="TIGR02537">
    <property type="entry name" value="arch_flag_Nterm"/>
    <property type="match status" value="1"/>
</dbReference>
<dbReference type="NCBIfam" id="NF006325">
    <property type="entry name" value="PRK08541.1"/>
    <property type="match status" value="1"/>
</dbReference>
<dbReference type="PANTHER" id="PTHR35903">
    <property type="entry name" value="FLAGELLIN B1"/>
    <property type="match status" value="1"/>
</dbReference>
<dbReference type="PANTHER" id="PTHR35903:SF1">
    <property type="entry name" value="FLAGELLIN B1"/>
    <property type="match status" value="1"/>
</dbReference>
<dbReference type="Pfam" id="PF01917">
    <property type="entry name" value="Arch_flagellin"/>
    <property type="match status" value="1"/>
</dbReference>
<evidence type="ECO:0000250" key="1"/>
<evidence type="ECO:0000305" key="2"/>
<reference key="1">
    <citation type="journal article" date="2003" name="Mol. Microbiol.">
        <title>An integrated analysis of the genome of the hyperthermophilic archaeon Pyrococcus abyssi.</title>
        <authorList>
            <person name="Cohen G.N."/>
            <person name="Barbe V."/>
            <person name="Flament D."/>
            <person name="Galperin M."/>
            <person name="Heilig R."/>
            <person name="Lecompte O."/>
            <person name="Poch O."/>
            <person name="Prieur D."/>
            <person name="Querellou J."/>
            <person name="Ripp R."/>
            <person name="Thierry J.-C."/>
            <person name="Van der Oost J."/>
            <person name="Weissenbach J."/>
            <person name="Zivanovic Y."/>
            <person name="Forterre P."/>
        </authorList>
    </citation>
    <scope>NUCLEOTIDE SEQUENCE [LARGE SCALE GENOMIC DNA]</scope>
    <source>
        <strain>GE5 / Orsay</strain>
    </source>
</reference>
<reference key="2">
    <citation type="journal article" date="2012" name="Curr. Microbiol.">
        <title>Re-annotation of two hyperthermophilic archaea Pyrococcus abyssi GE5 and Pyrococcus furiosus DSM 3638.</title>
        <authorList>
            <person name="Gao J."/>
            <person name="Wang J."/>
        </authorList>
    </citation>
    <scope>GENOME REANNOTATION</scope>
    <source>
        <strain>GE5 / Orsay</strain>
    </source>
</reference>
<gene>
    <name type="primary">flaB5</name>
    <name type="ordered locus">PYRAB14930</name>
    <name type="ORF">PAB1380</name>
</gene>
<feature type="propeptide" id="PRO_0000009403" evidence="1">
    <location>
        <begin position="1"/>
        <end position="4"/>
    </location>
</feature>
<feature type="chain" id="PRO_0000009404" description="Flagellin B5">
    <location>
        <begin position="5"/>
        <end position="222"/>
    </location>
</feature>
<protein>
    <recommendedName>
        <fullName>Flagellin B5</fullName>
    </recommendedName>
</protein>
<proteinExistence type="inferred from homology"/>
<keyword id="KW-0974">Archaeal flagellum</keyword>
<comment type="function">
    <text>Flagellin is the subunit protein which polymerizes to form the filaments of archaeal flagella.</text>
</comment>
<comment type="subcellular location">
    <subcellularLocation>
        <location>Archaeal flagellum</location>
    </subcellularLocation>
</comment>
<comment type="similarity">
    <text evidence="2">Belongs to the archaeal flagellin family.</text>
</comment>
<organism>
    <name type="scientific">Pyrococcus abyssi (strain GE5 / Orsay)</name>
    <dbReference type="NCBI Taxonomy" id="272844"/>
    <lineage>
        <taxon>Archaea</taxon>
        <taxon>Methanobacteriati</taxon>
        <taxon>Methanobacteriota</taxon>
        <taxon>Thermococci</taxon>
        <taxon>Thermococcales</taxon>
        <taxon>Thermococcaceae</taxon>
        <taxon>Pyrococcus</taxon>
    </lineage>
</organism>
<name>FLAB5_PYRAB</name>
<accession>Q9UYL4</accession>
<accession>G8ZIR2</accession>